<protein>
    <recommendedName>
        <fullName evidence="1">NADH-quinone oxidoreductase subunit D</fullName>
        <ecNumber evidence="1">7.1.1.-</ecNumber>
    </recommendedName>
    <alternativeName>
        <fullName evidence="1">NADH dehydrogenase I subunit D</fullName>
    </alternativeName>
    <alternativeName>
        <fullName evidence="1">NDH-1 subunit D</fullName>
    </alternativeName>
</protein>
<keyword id="KW-1003">Cell membrane</keyword>
<keyword id="KW-0472">Membrane</keyword>
<keyword id="KW-0520">NAD</keyword>
<keyword id="KW-0874">Quinone</keyword>
<keyword id="KW-1278">Translocase</keyword>
<keyword id="KW-0813">Transport</keyword>
<gene>
    <name evidence="1" type="primary">nuoD</name>
    <name type="ordered locus">BT9727_4979</name>
</gene>
<dbReference type="EC" id="7.1.1.-" evidence="1"/>
<dbReference type="EMBL" id="AE017355">
    <property type="protein sequence ID" value="AAT63577.1"/>
    <property type="molecule type" value="Genomic_DNA"/>
</dbReference>
<dbReference type="RefSeq" id="WP_000621441.1">
    <property type="nucleotide sequence ID" value="NC_005957.1"/>
</dbReference>
<dbReference type="RefSeq" id="YP_039288.1">
    <property type="nucleotide sequence ID" value="NC_005957.1"/>
</dbReference>
<dbReference type="SMR" id="Q6HAY8"/>
<dbReference type="KEGG" id="btk:BT9727_4979"/>
<dbReference type="PATRIC" id="fig|281309.8.peg.5296"/>
<dbReference type="HOGENOM" id="CLU_015134_1_2_9"/>
<dbReference type="Proteomes" id="UP000001301">
    <property type="component" value="Chromosome"/>
</dbReference>
<dbReference type="GO" id="GO:0005886">
    <property type="term" value="C:plasma membrane"/>
    <property type="evidence" value="ECO:0007669"/>
    <property type="project" value="UniProtKB-SubCell"/>
</dbReference>
<dbReference type="GO" id="GO:0051287">
    <property type="term" value="F:NAD binding"/>
    <property type="evidence" value="ECO:0007669"/>
    <property type="project" value="InterPro"/>
</dbReference>
<dbReference type="GO" id="GO:0050136">
    <property type="term" value="F:NADH:ubiquinone reductase (non-electrogenic) activity"/>
    <property type="evidence" value="ECO:0007669"/>
    <property type="project" value="UniProtKB-UniRule"/>
</dbReference>
<dbReference type="GO" id="GO:0048038">
    <property type="term" value="F:quinone binding"/>
    <property type="evidence" value="ECO:0007669"/>
    <property type="project" value="UniProtKB-KW"/>
</dbReference>
<dbReference type="FunFam" id="1.10.645.10:FF:000006">
    <property type="entry name" value="NADH-quinone oxidoreductase subunit D"/>
    <property type="match status" value="1"/>
</dbReference>
<dbReference type="Gene3D" id="1.10.645.10">
    <property type="entry name" value="Cytochrome-c3 Hydrogenase, chain B"/>
    <property type="match status" value="1"/>
</dbReference>
<dbReference type="HAMAP" id="MF_01358">
    <property type="entry name" value="NDH1_NuoD"/>
    <property type="match status" value="1"/>
</dbReference>
<dbReference type="InterPro" id="IPR001135">
    <property type="entry name" value="NADH_Q_OxRdtase_suD"/>
</dbReference>
<dbReference type="InterPro" id="IPR022885">
    <property type="entry name" value="NDH1_su_D/H"/>
</dbReference>
<dbReference type="InterPro" id="IPR029014">
    <property type="entry name" value="NiFe-Hase_large"/>
</dbReference>
<dbReference type="NCBIfam" id="NF004739">
    <property type="entry name" value="PRK06075.1"/>
    <property type="match status" value="1"/>
</dbReference>
<dbReference type="NCBIfam" id="NF008974">
    <property type="entry name" value="PRK12322.1"/>
    <property type="match status" value="1"/>
</dbReference>
<dbReference type="PANTHER" id="PTHR11993:SF10">
    <property type="entry name" value="NADH DEHYDROGENASE [UBIQUINONE] IRON-SULFUR PROTEIN 2, MITOCHONDRIAL"/>
    <property type="match status" value="1"/>
</dbReference>
<dbReference type="PANTHER" id="PTHR11993">
    <property type="entry name" value="NADH-UBIQUINONE OXIDOREDUCTASE 49 KDA SUBUNIT"/>
    <property type="match status" value="1"/>
</dbReference>
<dbReference type="Pfam" id="PF00346">
    <property type="entry name" value="Complex1_49kDa"/>
    <property type="match status" value="2"/>
</dbReference>
<dbReference type="SUPFAM" id="SSF56762">
    <property type="entry name" value="HydB/Nqo4-like"/>
    <property type="match status" value="1"/>
</dbReference>
<accession>Q6HAY8</accession>
<feature type="chain" id="PRO_0000357769" description="NADH-quinone oxidoreductase subunit D">
    <location>
        <begin position="1"/>
        <end position="366"/>
    </location>
</feature>
<name>NUOD_BACHK</name>
<sequence length="366" mass="41528">MIRTEEMLLNVGPQHPSTHGVFRLVIKIDGEIIKEATPVIGYLHRGTEKIAESLQYTQIIPYTDRMDYLSAMTNNYVICHAVETMMGLEIPERAEYLRVLAMELGRIASHLVWWGTNLLDIGAVSPFLYAFREREMIINLLNELCGARLTFNYMRVGGVKWDAPDGWIEKVEEFVPYMREQLAGYHDLVSGNEIFLNRVKGVGIYSAEEAISYSLSGANLRCTGVNWDLRKDEPYSIYDRFDFHIPVGSVGDAWDRYVCRMQEIEESLKIVEQAVQQFPKEGAVLAKVPKIIKAPKGEAFVRIESPRGEIGCYIASDGKKEPYRLKFRRPSFYNLQILPKLLKGENIANLITILGGVDIVLGEVDG</sequence>
<reference key="1">
    <citation type="journal article" date="2006" name="J. Bacteriol.">
        <title>Pathogenomic sequence analysis of Bacillus cereus and Bacillus thuringiensis isolates closely related to Bacillus anthracis.</title>
        <authorList>
            <person name="Han C.S."/>
            <person name="Xie G."/>
            <person name="Challacombe J.F."/>
            <person name="Altherr M.R."/>
            <person name="Bhotika S.S."/>
            <person name="Bruce D."/>
            <person name="Campbell C.S."/>
            <person name="Campbell M.L."/>
            <person name="Chen J."/>
            <person name="Chertkov O."/>
            <person name="Cleland C."/>
            <person name="Dimitrijevic M."/>
            <person name="Doggett N.A."/>
            <person name="Fawcett J.J."/>
            <person name="Glavina T."/>
            <person name="Goodwin L.A."/>
            <person name="Hill K.K."/>
            <person name="Hitchcock P."/>
            <person name="Jackson P.J."/>
            <person name="Keim P."/>
            <person name="Kewalramani A.R."/>
            <person name="Longmire J."/>
            <person name="Lucas S."/>
            <person name="Malfatti S."/>
            <person name="McMurry K."/>
            <person name="Meincke L.J."/>
            <person name="Misra M."/>
            <person name="Moseman B.L."/>
            <person name="Mundt M."/>
            <person name="Munk A.C."/>
            <person name="Okinaka R.T."/>
            <person name="Parson-Quintana B."/>
            <person name="Reilly L.P."/>
            <person name="Richardson P."/>
            <person name="Robinson D.L."/>
            <person name="Rubin E."/>
            <person name="Saunders E."/>
            <person name="Tapia R."/>
            <person name="Tesmer J.G."/>
            <person name="Thayer N."/>
            <person name="Thompson L.S."/>
            <person name="Tice H."/>
            <person name="Ticknor L.O."/>
            <person name="Wills P.L."/>
            <person name="Brettin T.S."/>
            <person name="Gilna P."/>
        </authorList>
    </citation>
    <scope>NUCLEOTIDE SEQUENCE [LARGE SCALE GENOMIC DNA]</scope>
    <source>
        <strain>97-27</strain>
    </source>
</reference>
<evidence type="ECO:0000255" key="1">
    <source>
        <dbReference type="HAMAP-Rule" id="MF_01358"/>
    </source>
</evidence>
<organism>
    <name type="scientific">Bacillus thuringiensis subsp. konkukian (strain 97-27)</name>
    <dbReference type="NCBI Taxonomy" id="281309"/>
    <lineage>
        <taxon>Bacteria</taxon>
        <taxon>Bacillati</taxon>
        <taxon>Bacillota</taxon>
        <taxon>Bacilli</taxon>
        <taxon>Bacillales</taxon>
        <taxon>Bacillaceae</taxon>
        <taxon>Bacillus</taxon>
        <taxon>Bacillus cereus group</taxon>
    </lineage>
</organism>
<proteinExistence type="inferred from homology"/>
<comment type="function">
    <text evidence="1">NDH-1 shuttles electrons from NADH, via FMN and iron-sulfur (Fe-S) centers, to quinones in the respiratory chain. The immediate electron acceptor for the enzyme in this species is believed to be a menaquinone. Couples the redox reaction to proton translocation (for every two electrons transferred, four hydrogen ions are translocated across the cytoplasmic membrane), and thus conserves the redox energy in a proton gradient.</text>
</comment>
<comment type="catalytic activity">
    <reaction evidence="1">
        <text>a quinone + NADH + 5 H(+)(in) = a quinol + NAD(+) + 4 H(+)(out)</text>
        <dbReference type="Rhea" id="RHEA:57888"/>
        <dbReference type="ChEBI" id="CHEBI:15378"/>
        <dbReference type="ChEBI" id="CHEBI:24646"/>
        <dbReference type="ChEBI" id="CHEBI:57540"/>
        <dbReference type="ChEBI" id="CHEBI:57945"/>
        <dbReference type="ChEBI" id="CHEBI:132124"/>
    </reaction>
</comment>
<comment type="subunit">
    <text evidence="1">NDH-1 is composed of 14 different subunits. Subunits NuoB, C, D, E, F, and G constitute the peripheral sector of the complex.</text>
</comment>
<comment type="subcellular location">
    <subcellularLocation>
        <location evidence="1">Cell membrane</location>
        <topology evidence="1">Peripheral membrane protein</topology>
        <orientation evidence="1">Cytoplasmic side</orientation>
    </subcellularLocation>
</comment>
<comment type="similarity">
    <text evidence="1">Belongs to the complex I 49 kDa subunit family.</text>
</comment>